<accession>Q9CHW3</accession>
<feature type="chain" id="PRO_0000435617" description="Phosphoserine phosphatase" evidence="3">
    <location>
        <begin position="1"/>
        <end position="216"/>
    </location>
</feature>
<feature type="active site" description="Nucleophile" evidence="1">
    <location>
        <position position="10"/>
    </location>
</feature>
<feature type="active site" description="Proton donor" evidence="1">
    <location>
        <position position="12"/>
    </location>
</feature>
<feature type="binding site" evidence="1">
    <location>
        <position position="10"/>
    </location>
    <ligand>
        <name>Mg(2+)</name>
        <dbReference type="ChEBI" id="CHEBI:18420"/>
    </ligand>
</feature>
<feature type="binding site" evidence="1">
    <location>
        <position position="12"/>
    </location>
    <ligand>
        <name>Mg(2+)</name>
        <dbReference type="ChEBI" id="CHEBI:18420"/>
    </ligand>
</feature>
<feature type="binding site" evidence="1">
    <location>
        <position position="19"/>
    </location>
    <ligand>
        <name>substrate</name>
    </ligand>
</feature>
<feature type="binding site" evidence="1">
    <location>
        <position position="55"/>
    </location>
    <ligand>
        <name>substrate</name>
    </ligand>
</feature>
<feature type="binding site" evidence="1">
    <location>
        <begin position="98"/>
        <end position="99"/>
    </location>
    <ligand>
        <name>substrate</name>
    </ligand>
</feature>
<feature type="binding site" evidence="1">
    <location>
        <position position="143"/>
    </location>
    <ligand>
        <name>substrate</name>
    </ligand>
</feature>
<feature type="binding site" evidence="1">
    <location>
        <position position="166"/>
    </location>
    <ligand>
        <name>Mg(2+)</name>
        <dbReference type="ChEBI" id="CHEBI:18420"/>
    </ligand>
</feature>
<feature type="binding site" evidence="1">
    <location>
        <position position="169"/>
    </location>
    <ligand>
        <name>substrate</name>
    </ligand>
</feature>
<dbReference type="EC" id="3.1.3.3" evidence="2"/>
<dbReference type="EMBL" id="AE005176">
    <property type="protein sequence ID" value="AAK04703.1"/>
    <property type="molecule type" value="Genomic_DNA"/>
</dbReference>
<dbReference type="PIR" id="E86700">
    <property type="entry name" value="E86700"/>
</dbReference>
<dbReference type="RefSeq" id="NP_266761.1">
    <property type="nucleotide sequence ID" value="NC_002662.1"/>
</dbReference>
<dbReference type="RefSeq" id="WP_010905459.1">
    <property type="nucleotide sequence ID" value="NC_002662.1"/>
</dbReference>
<dbReference type="SMR" id="Q9CHW3"/>
<dbReference type="PaxDb" id="272623-L0085"/>
<dbReference type="EnsemblBacteria" id="AAK04703">
    <property type="protein sequence ID" value="AAK04703"/>
    <property type="gene ID" value="L0085"/>
</dbReference>
<dbReference type="KEGG" id="lla:L0085"/>
<dbReference type="PATRIC" id="fig|272623.7.peg.645"/>
<dbReference type="eggNOG" id="COG0560">
    <property type="taxonomic scope" value="Bacteria"/>
</dbReference>
<dbReference type="HOGENOM" id="CLU_036368_4_3_9"/>
<dbReference type="OrthoDB" id="9790031at2"/>
<dbReference type="UniPathway" id="UPA00135">
    <property type="reaction ID" value="UER00198"/>
</dbReference>
<dbReference type="Proteomes" id="UP000002196">
    <property type="component" value="Chromosome"/>
</dbReference>
<dbReference type="GO" id="GO:0005737">
    <property type="term" value="C:cytoplasm"/>
    <property type="evidence" value="ECO:0007669"/>
    <property type="project" value="TreeGrafter"/>
</dbReference>
<dbReference type="GO" id="GO:0036424">
    <property type="term" value="F:L-phosphoserine phosphatase activity"/>
    <property type="evidence" value="ECO:0007669"/>
    <property type="project" value="InterPro"/>
</dbReference>
<dbReference type="GO" id="GO:0000287">
    <property type="term" value="F:magnesium ion binding"/>
    <property type="evidence" value="ECO:0007669"/>
    <property type="project" value="TreeGrafter"/>
</dbReference>
<dbReference type="GO" id="GO:0006564">
    <property type="term" value="P:L-serine biosynthetic process"/>
    <property type="evidence" value="ECO:0007669"/>
    <property type="project" value="UniProtKB-KW"/>
</dbReference>
<dbReference type="CDD" id="cd07500">
    <property type="entry name" value="HAD_PSP"/>
    <property type="match status" value="1"/>
</dbReference>
<dbReference type="Gene3D" id="3.40.50.1000">
    <property type="entry name" value="HAD superfamily/HAD-like"/>
    <property type="match status" value="1"/>
</dbReference>
<dbReference type="InterPro" id="IPR050582">
    <property type="entry name" value="HAD-like_SerB"/>
</dbReference>
<dbReference type="InterPro" id="IPR036412">
    <property type="entry name" value="HAD-like_sf"/>
</dbReference>
<dbReference type="InterPro" id="IPR023214">
    <property type="entry name" value="HAD_sf"/>
</dbReference>
<dbReference type="InterPro" id="IPR004469">
    <property type="entry name" value="PSP"/>
</dbReference>
<dbReference type="NCBIfam" id="TIGR01488">
    <property type="entry name" value="HAD-SF-IB"/>
    <property type="match status" value="1"/>
</dbReference>
<dbReference type="NCBIfam" id="TIGR00338">
    <property type="entry name" value="serB"/>
    <property type="match status" value="1"/>
</dbReference>
<dbReference type="PANTHER" id="PTHR43344">
    <property type="entry name" value="PHOSPHOSERINE PHOSPHATASE"/>
    <property type="match status" value="1"/>
</dbReference>
<dbReference type="PANTHER" id="PTHR43344:SF2">
    <property type="entry name" value="PHOSPHOSERINE PHOSPHATASE"/>
    <property type="match status" value="1"/>
</dbReference>
<dbReference type="Pfam" id="PF12710">
    <property type="entry name" value="HAD"/>
    <property type="match status" value="1"/>
</dbReference>
<dbReference type="SFLD" id="SFLDS00003">
    <property type="entry name" value="Haloacid_Dehalogenase"/>
    <property type="match status" value="1"/>
</dbReference>
<dbReference type="SFLD" id="SFLDF00029">
    <property type="entry name" value="phosphoserine_phosphatase"/>
    <property type="match status" value="1"/>
</dbReference>
<dbReference type="SUPFAM" id="SSF56784">
    <property type="entry name" value="HAD-like"/>
    <property type="match status" value="1"/>
</dbReference>
<gene>
    <name evidence="5" type="primary">serB</name>
    <name evidence="3" type="ordered locus">LL0605</name>
    <name evidence="5" type="ORF">L0085</name>
</gene>
<comment type="catalytic activity">
    <reaction evidence="2">
        <text>O-phospho-L-serine + H2O = L-serine + phosphate</text>
        <dbReference type="Rhea" id="RHEA:21208"/>
        <dbReference type="ChEBI" id="CHEBI:15377"/>
        <dbReference type="ChEBI" id="CHEBI:33384"/>
        <dbReference type="ChEBI" id="CHEBI:43474"/>
        <dbReference type="ChEBI" id="CHEBI:57524"/>
        <dbReference type="EC" id="3.1.3.3"/>
    </reaction>
</comment>
<comment type="catalytic activity">
    <reaction evidence="2">
        <text>O-phospho-D-serine + H2O = D-serine + phosphate</text>
        <dbReference type="Rhea" id="RHEA:24873"/>
        <dbReference type="ChEBI" id="CHEBI:15377"/>
        <dbReference type="ChEBI" id="CHEBI:35247"/>
        <dbReference type="ChEBI" id="CHEBI:43474"/>
        <dbReference type="ChEBI" id="CHEBI:58680"/>
        <dbReference type="EC" id="3.1.3.3"/>
    </reaction>
</comment>
<comment type="cofactor">
    <cofactor evidence="2">
        <name>Mg(2+)</name>
        <dbReference type="ChEBI" id="CHEBI:18420"/>
    </cofactor>
</comment>
<comment type="pathway">
    <text evidence="3">Amino-acid biosynthesis; L-serine biosynthesis; L-serine from 3-phospho-D-glycerate: step 3/3.</text>
</comment>
<comment type="similarity">
    <text evidence="3">Belongs to the HAD-like hydrolase superfamily. SerB family.</text>
</comment>
<name>SERB_LACLA</name>
<protein>
    <recommendedName>
        <fullName evidence="4">Phosphoserine phosphatase</fullName>
        <shortName evidence="1">PSP</shortName>
        <shortName evidence="1">PSPase</shortName>
        <ecNumber evidence="2">3.1.3.3</ecNumber>
    </recommendedName>
    <alternativeName>
        <fullName evidence="1">O-phosphoserine phosphohydrolase</fullName>
    </alternativeName>
</protein>
<proteinExistence type="evidence at protein level"/>
<reference evidence="6" key="1">
    <citation type="journal article" date="2001" name="Genome Res.">
        <title>The complete genome sequence of the lactic acid bacterium Lactococcus lactis ssp. lactis IL1403.</title>
        <authorList>
            <person name="Bolotin A."/>
            <person name="Wincker P."/>
            <person name="Mauger S."/>
            <person name="Jaillon O."/>
            <person name="Malarme K."/>
            <person name="Weissenbach J."/>
            <person name="Ehrlich S.D."/>
            <person name="Sorokin A."/>
        </authorList>
    </citation>
    <scope>NUCLEOTIDE SEQUENCE [LARGE SCALE GENOMIC DNA]</scope>
    <source>
        <strain evidence="5 6">IL1403</strain>
    </source>
</reference>
<reference evidence="3" key="2">
    <citation type="journal article" date="2015" name="Proc. Natl. Acad. Sci. U.S.A.">
        <title>Panoramic view of a superfamily of phosphatases through substrate profiling.</title>
        <authorList>
            <person name="Huang H."/>
            <person name="Pandya C."/>
            <person name="Liu C."/>
            <person name="Al-Obaidi N.F."/>
            <person name="Wang M."/>
            <person name="Zheng L."/>
            <person name="Toews Keating S."/>
            <person name="Aono M."/>
            <person name="Love J.D."/>
            <person name="Evans B."/>
            <person name="Seidel R.D."/>
            <person name="Hillerich B.S."/>
            <person name="Garforth S.J."/>
            <person name="Almo S.C."/>
            <person name="Mariano P.S."/>
            <person name="Dunaway-Mariano D."/>
            <person name="Allen K.N."/>
            <person name="Farelli J.D."/>
        </authorList>
    </citation>
    <scope>CATALYTIC ACTIVITY</scope>
    <scope>COFACTOR</scope>
</reference>
<keyword id="KW-0028">Amino-acid biosynthesis</keyword>
<keyword id="KW-0378">Hydrolase</keyword>
<keyword id="KW-0460">Magnesium</keyword>
<keyword id="KW-0479">Metal-binding</keyword>
<keyword id="KW-1185">Reference proteome</keyword>
<keyword id="KW-0718">Serine biosynthesis</keyword>
<evidence type="ECO:0000250" key="1">
    <source>
        <dbReference type="UniProtKB" id="Q58989"/>
    </source>
</evidence>
<evidence type="ECO:0000269" key="2">
    <source>
    </source>
</evidence>
<evidence type="ECO:0000305" key="3"/>
<evidence type="ECO:0000305" key="4">
    <source>
    </source>
</evidence>
<evidence type="ECO:0000312" key="5">
    <source>
        <dbReference type="EMBL" id="AAK04703.1"/>
    </source>
</evidence>
<evidence type="ECO:0000312" key="6">
    <source>
        <dbReference type="Proteomes" id="UP000002196"/>
    </source>
</evidence>
<sequence>MAAKGLLVMDVDSTLIEEEVIDLLGEKAGMGDKISEITAAAMSGEIDFKESLRERVALLSGLPTTIFDDVYKEIHLTKGATGLIETLHAKGWKVGLVSGGFHEIVDKIARDLKIDYVFANRLSVENGHLTGKTHGTVVDKDFKVDRLKQWANENKLNLSEVIAVGDGANDIPMLNTAGIGIAFCAKPAVKAAVSYHIDKRNLLTVLEFVDKLADKE</sequence>
<organism evidence="6">
    <name type="scientific">Lactococcus lactis subsp. lactis (strain IL1403)</name>
    <name type="common">Streptococcus lactis</name>
    <dbReference type="NCBI Taxonomy" id="272623"/>
    <lineage>
        <taxon>Bacteria</taxon>
        <taxon>Bacillati</taxon>
        <taxon>Bacillota</taxon>
        <taxon>Bacilli</taxon>
        <taxon>Lactobacillales</taxon>
        <taxon>Streptococcaceae</taxon>
        <taxon>Lactococcus</taxon>
    </lineage>
</organism>